<evidence type="ECO:0000255" key="1">
    <source>
        <dbReference type="HAMAP-Rule" id="MF_01556"/>
    </source>
</evidence>
<gene>
    <name evidence="1" type="primary">lacB</name>
    <name type="ordered locus">SACOL2185</name>
</gene>
<accession>Q5HE11</accession>
<proteinExistence type="inferred from homology"/>
<feature type="chain" id="PRO_0000208137" description="Galactose-6-phosphate isomerase subunit LacB">
    <location>
        <begin position="1"/>
        <end position="171"/>
    </location>
</feature>
<dbReference type="EC" id="5.3.1.26" evidence="1"/>
<dbReference type="EMBL" id="CP000046">
    <property type="protein sequence ID" value="AAW37061.1"/>
    <property type="molecule type" value="Genomic_DNA"/>
</dbReference>
<dbReference type="RefSeq" id="WP_000684746.1">
    <property type="nucleotide sequence ID" value="NZ_JBGOFO010000004.1"/>
</dbReference>
<dbReference type="SMR" id="Q5HE11"/>
<dbReference type="KEGG" id="sac:SACOL2185"/>
<dbReference type="HOGENOM" id="CLU_091396_2_0_9"/>
<dbReference type="UniPathway" id="UPA00702">
    <property type="reaction ID" value="UER00714"/>
</dbReference>
<dbReference type="Proteomes" id="UP000000530">
    <property type="component" value="Chromosome"/>
</dbReference>
<dbReference type="GO" id="GO:0050044">
    <property type="term" value="F:galactose-6-phosphate isomerase activity"/>
    <property type="evidence" value="ECO:0007669"/>
    <property type="project" value="UniProtKB-UniRule"/>
</dbReference>
<dbReference type="GO" id="GO:0004751">
    <property type="term" value="F:ribose-5-phosphate isomerase activity"/>
    <property type="evidence" value="ECO:0007669"/>
    <property type="project" value="TreeGrafter"/>
</dbReference>
<dbReference type="GO" id="GO:0019316">
    <property type="term" value="P:D-allose catabolic process"/>
    <property type="evidence" value="ECO:0007669"/>
    <property type="project" value="TreeGrafter"/>
</dbReference>
<dbReference type="GO" id="GO:0019388">
    <property type="term" value="P:galactose catabolic process"/>
    <property type="evidence" value="ECO:0007669"/>
    <property type="project" value="UniProtKB-UniPathway"/>
</dbReference>
<dbReference type="GO" id="GO:0019512">
    <property type="term" value="P:lactose catabolic process via tagatose-6-phosphate"/>
    <property type="evidence" value="ECO:0007669"/>
    <property type="project" value="UniProtKB-UniRule"/>
</dbReference>
<dbReference type="GO" id="GO:0009052">
    <property type="term" value="P:pentose-phosphate shunt, non-oxidative branch"/>
    <property type="evidence" value="ECO:0007669"/>
    <property type="project" value="TreeGrafter"/>
</dbReference>
<dbReference type="Gene3D" id="3.40.1400.10">
    <property type="entry name" value="Sugar-phosphate isomerase, RpiB/LacA/LacB"/>
    <property type="match status" value="1"/>
</dbReference>
<dbReference type="HAMAP" id="MF_01556">
    <property type="entry name" value="LacB"/>
    <property type="match status" value="1"/>
</dbReference>
<dbReference type="InterPro" id="IPR004784">
    <property type="entry name" value="LacB"/>
</dbReference>
<dbReference type="InterPro" id="IPR003500">
    <property type="entry name" value="RpiB_LacA_LacB"/>
</dbReference>
<dbReference type="InterPro" id="IPR036569">
    <property type="entry name" value="RpiB_LacA_LacB_sf"/>
</dbReference>
<dbReference type="NCBIfam" id="TIGR01119">
    <property type="entry name" value="lacB"/>
    <property type="match status" value="1"/>
</dbReference>
<dbReference type="NCBIfam" id="NF004051">
    <property type="entry name" value="PRK05571.1"/>
    <property type="match status" value="1"/>
</dbReference>
<dbReference type="NCBIfam" id="NF006381">
    <property type="entry name" value="PRK08622.1"/>
    <property type="match status" value="1"/>
</dbReference>
<dbReference type="NCBIfam" id="NF009258">
    <property type="entry name" value="PRK12615.1"/>
    <property type="match status" value="1"/>
</dbReference>
<dbReference type="NCBIfam" id="TIGR00689">
    <property type="entry name" value="rpiB_lacA_lacB"/>
    <property type="match status" value="1"/>
</dbReference>
<dbReference type="PANTHER" id="PTHR30345:SF0">
    <property type="entry name" value="DNA DAMAGE-REPAIR_TOLERATION PROTEIN DRT102"/>
    <property type="match status" value="1"/>
</dbReference>
<dbReference type="PANTHER" id="PTHR30345">
    <property type="entry name" value="RIBOSE-5-PHOSPHATE ISOMERASE B"/>
    <property type="match status" value="1"/>
</dbReference>
<dbReference type="Pfam" id="PF02502">
    <property type="entry name" value="LacAB_rpiB"/>
    <property type="match status" value="1"/>
</dbReference>
<dbReference type="PIRSF" id="PIRSF005384">
    <property type="entry name" value="RpiB_LacA_B"/>
    <property type="match status" value="1"/>
</dbReference>
<dbReference type="SUPFAM" id="SSF89623">
    <property type="entry name" value="Ribose/Galactose isomerase RpiB/AlsB"/>
    <property type="match status" value="1"/>
</dbReference>
<comment type="catalytic activity">
    <reaction evidence="1">
        <text>aldehydo-D-galactose 6-phosphate = keto-D-tagatose 6-phosphate</text>
        <dbReference type="Rhea" id="RHEA:13033"/>
        <dbReference type="ChEBI" id="CHEBI:58255"/>
        <dbReference type="ChEBI" id="CHEBI:134283"/>
        <dbReference type="EC" id="5.3.1.26"/>
    </reaction>
</comment>
<comment type="pathway">
    <text evidence="1">Carbohydrate metabolism; D-galactose 6-phosphate degradation; D-tagatose 6-phosphate from D-galactose 6-phosphate: step 1/1.</text>
</comment>
<comment type="subunit">
    <text evidence="1">Heteromultimeric protein consisting of LacA and LacB.</text>
</comment>
<comment type="similarity">
    <text evidence="1">Belongs to the LacAB/RpiB family.</text>
</comment>
<protein>
    <recommendedName>
        <fullName evidence="1">Galactose-6-phosphate isomerase subunit LacB</fullName>
        <ecNumber evidence="1">5.3.1.26</ecNumber>
    </recommendedName>
</protein>
<reference key="1">
    <citation type="journal article" date="2005" name="J. Bacteriol.">
        <title>Insights on evolution of virulence and resistance from the complete genome analysis of an early methicillin-resistant Staphylococcus aureus strain and a biofilm-producing methicillin-resistant Staphylococcus epidermidis strain.</title>
        <authorList>
            <person name="Gill S.R."/>
            <person name="Fouts D.E."/>
            <person name="Archer G.L."/>
            <person name="Mongodin E.F."/>
            <person name="DeBoy R.T."/>
            <person name="Ravel J."/>
            <person name="Paulsen I.T."/>
            <person name="Kolonay J.F."/>
            <person name="Brinkac L.M."/>
            <person name="Beanan M.J."/>
            <person name="Dodson R.J."/>
            <person name="Daugherty S.C."/>
            <person name="Madupu R."/>
            <person name="Angiuoli S.V."/>
            <person name="Durkin A.S."/>
            <person name="Haft D.H."/>
            <person name="Vamathevan J.J."/>
            <person name="Khouri H."/>
            <person name="Utterback T.R."/>
            <person name="Lee C."/>
            <person name="Dimitrov G."/>
            <person name="Jiang L."/>
            <person name="Qin H."/>
            <person name="Weidman J."/>
            <person name="Tran K."/>
            <person name="Kang K.H."/>
            <person name="Hance I.R."/>
            <person name="Nelson K.E."/>
            <person name="Fraser C.M."/>
        </authorList>
    </citation>
    <scope>NUCLEOTIDE SEQUENCE [LARGE SCALE GENOMIC DNA]</scope>
    <source>
        <strain>COL</strain>
    </source>
</reference>
<organism>
    <name type="scientific">Staphylococcus aureus (strain COL)</name>
    <dbReference type="NCBI Taxonomy" id="93062"/>
    <lineage>
        <taxon>Bacteria</taxon>
        <taxon>Bacillati</taxon>
        <taxon>Bacillota</taxon>
        <taxon>Bacilli</taxon>
        <taxon>Bacillales</taxon>
        <taxon>Staphylococcaceae</taxon>
        <taxon>Staphylococcus</taxon>
    </lineage>
</organism>
<sequence length="171" mass="18951">MKIALGCDHIVTDTKMRVSEFLKSKGHEVIDVGTYDFTRTHYPIFGKKVGEQVVSGNADLGVCICGTGVGINNAVNKVPGVRSALVRDMTSALYAKEELNANVIGFGGRIIGELLMCDIIDAFINAEYKPTEENKKLIAKIKHLETSNADQADPHFFDEFLEKWDRGEYHD</sequence>
<keyword id="KW-0413">Isomerase</keyword>
<keyword id="KW-0423">Lactose metabolism</keyword>
<name>LACB_STAAC</name>